<gene>
    <name evidence="1" type="primary">aroA</name>
    <name type="ordered locus">Anae109_0204</name>
</gene>
<sequence length="430" mass="44959">MTGSLTCRRKGPLRGSIEVPGDKSISHRALLFGALSTGETRVRGLLDAEDVHATRRAVEALGATVRAEGEELVVVPPPALREPGDVVDCGNSGTSLRLLTGVLSGVPGLSILTGDASLRRRPVRRVIEPLRRMGADLSARDGDRLPPVVVRGRPLRGARHVLEVASAQVKSACLLAGLFAEGETTVVEPERSRDHTERMLAGMGVPVRVDGLEVTVAPARPRGGRVDVPGDISSAAFFLCAAAALPGSEVTVRNLGVNPTRTGLLDVLGAMGAALSRANEREVAGEPRADVTVRAAALHGTEIGGAIIPRLIDELPVVMVMATQARGRTVIRDAKELRVKESDRLASMGEALARAGAKIELFEDGCAIEGPTPLRGVAVQTRLDHRIAMSMAVAQLLAGGEEVVLDDVACVATSFPSFFALLDGLCEGGA</sequence>
<evidence type="ECO:0000255" key="1">
    <source>
        <dbReference type="HAMAP-Rule" id="MF_00210"/>
    </source>
</evidence>
<organism>
    <name type="scientific">Anaeromyxobacter sp. (strain Fw109-5)</name>
    <dbReference type="NCBI Taxonomy" id="404589"/>
    <lineage>
        <taxon>Bacteria</taxon>
        <taxon>Pseudomonadati</taxon>
        <taxon>Myxococcota</taxon>
        <taxon>Myxococcia</taxon>
        <taxon>Myxococcales</taxon>
        <taxon>Cystobacterineae</taxon>
        <taxon>Anaeromyxobacteraceae</taxon>
        <taxon>Anaeromyxobacter</taxon>
    </lineage>
</organism>
<protein>
    <recommendedName>
        <fullName evidence="1">3-phosphoshikimate 1-carboxyvinyltransferase</fullName>
        <ecNumber evidence="1">2.5.1.19</ecNumber>
    </recommendedName>
    <alternativeName>
        <fullName evidence="1">5-enolpyruvylshikimate-3-phosphate synthase</fullName>
        <shortName evidence="1">EPSP synthase</shortName>
        <shortName evidence="1">EPSPS</shortName>
    </alternativeName>
</protein>
<feature type="chain" id="PRO_1000058594" description="3-phosphoshikimate 1-carboxyvinyltransferase">
    <location>
        <begin position="1"/>
        <end position="430"/>
    </location>
</feature>
<feature type="active site" description="Proton acceptor" evidence="1">
    <location>
        <position position="313"/>
    </location>
</feature>
<feature type="binding site" evidence="1">
    <location>
        <position position="23"/>
    </location>
    <ligand>
        <name>3-phosphoshikimate</name>
        <dbReference type="ChEBI" id="CHEBI:145989"/>
    </ligand>
</feature>
<feature type="binding site" evidence="1">
    <location>
        <position position="23"/>
    </location>
    <ligand>
        <name>phosphoenolpyruvate</name>
        <dbReference type="ChEBI" id="CHEBI:58702"/>
    </ligand>
</feature>
<feature type="binding site" evidence="1">
    <location>
        <position position="24"/>
    </location>
    <ligand>
        <name>3-phosphoshikimate</name>
        <dbReference type="ChEBI" id="CHEBI:145989"/>
    </ligand>
</feature>
<feature type="binding site" evidence="1">
    <location>
        <position position="28"/>
    </location>
    <ligand>
        <name>3-phosphoshikimate</name>
        <dbReference type="ChEBI" id="CHEBI:145989"/>
    </ligand>
</feature>
<feature type="binding site" evidence="1">
    <location>
        <position position="93"/>
    </location>
    <ligand>
        <name>phosphoenolpyruvate</name>
        <dbReference type="ChEBI" id="CHEBI:58702"/>
    </ligand>
</feature>
<feature type="binding site" evidence="1">
    <location>
        <position position="121"/>
    </location>
    <ligand>
        <name>phosphoenolpyruvate</name>
        <dbReference type="ChEBI" id="CHEBI:58702"/>
    </ligand>
</feature>
<feature type="binding site" evidence="1">
    <location>
        <position position="166"/>
    </location>
    <ligand>
        <name>3-phosphoshikimate</name>
        <dbReference type="ChEBI" id="CHEBI:145989"/>
    </ligand>
</feature>
<feature type="binding site" evidence="1">
    <location>
        <position position="168"/>
    </location>
    <ligand>
        <name>3-phosphoshikimate</name>
        <dbReference type="ChEBI" id="CHEBI:145989"/>
    </ligand>
</feature>
<feature type="binding site" evidence="1">
    <location>
        <position position="168"/>
    </location>
    <ligand>
        <name>phosphoenolpyruvate</name>
        <dbReference type="ChEBI" id="CHEBI:58702"/>
    </ligand>
</feature>
<feature type="binding site" evidence="1">
    <location>
        <position position="313"/>
    </location>
    <ligand>
        <name>3-phosphoshikimate</name>
        <dbReference type="ChEBI" id="CHEBI:145989"/>
    </ligand>
</feature>
<feature type="binding site" evidence="1">
    <location>
        <position position="340"/>
    </location>
    <ligand>
        <name>3-phosphoshikimate</name>
        <dbReference type="ChEBI" id="CHEBI:145989"/>
    </ligand>
</feature>
<feature type="binding site" evidence="1">
    <location>
        <position position="344"/>
    </location>
    <ligand>
        <name>phosphoenolpyruvate</name>
        <dbReference type="ChEBI" id="CHEBI:58702"/>
    </ligand>
</feature>
<feature type="binding site" evidence="1">
    <location>
        <position position="386"/>
    </location>
    <ligand>
        <name>phosphoenolpyruvate</name>
        <dbReference type="ChEBI" id="CHEBI:58702"/>
    </ligand>
</feature>
<name>AROA_ANADF</name>
<accession>A7H6S6</accession>
<keyword id="KW-0028">Amino-acid biosynthesis</keyword>
<keyword id="KW-0057">Aromatic amino acid biosynthesis</keyword>
<keyword id="KW-0963">Cytoplasm</keyword>
<keyword id="KW-1185">Reference proteome</keyword>
<keyword id="KW-0808">Transferase</keyword>
<dbReference type="EC" id="2.5.1.19" evidence="1"/>
<dbReference type="EMBL" id="CP000769">
    <property type="protein sequence ID" value="ABS24422.1"/>
    <property type="molecule type" value="Genomic_DNA"/>
</dbReference>
<dbReference type="RefSeq" id="WP_011984528.1">
    <property type="nucleotide sequence ID" value="NC_009675.1"/>
</dbReference>
<dbReference type="SMR" id="A7H6S6"/>
<dbReference type="STRING" id="404589.Anae109_0204"/>
<dbReference type="KEGG" id="afw:Anae109_0204"/>
<dbReference type="eggNOG" id="COG0128">
    <property type="taxonomic scope" value="Bacteria"/>
</dbReference>
<dbReference type="HOGENOM" id="CLU_024321_0_1_7"/>
<dbReference type="OrthoDB" id="9809920at2"/>
<dbReference type="UniPathway" id="UPA00053">
    <property type="reaction ID" value="UER00089"/>
</dbReference>
<dbReference type="Proteomes" id="UP000006382">
    <property type="component" value="Chromosome"/>
</dbReference>
<dbReference type="GO" id="GO:0005737">
    <property type="term" value="C:cytoplasm"/>
    <property type="evidence" value="ECO:0007669"/>
    <property type="project" value="UniProtKB-SubCell"/>
</dbReference>
<dbReference type="GO" id="GO:0003866">
    <property type="term" value="F:3-phosphoshikimate 1-carboxyvinyltransferase activity"/>
    <property type="evidence" value="ECO:0007669"/>
    <property type="project" value="UniProtKB-UniRule"/>
</dbReference>
<dbReference type="GO" id="GO:0008652">
    <property type="term" value="P:amino acid biosynthetic process"/>
    <property type="evidence" value="ECO:0007669"/>
    <property type="project" value="UniProtKB-KW"/>
</dbReference>
<dbReference type="GO" id="GO:0009073">
    <property type="term" value="P:aromatic amino acid family biosynthetic process"/>
    <property type="evidence" value="ECO:0007669"/>
    <property type="project" value="UniProtKB-KW"/>
</dbReference>
<dbReference type="GO" id="GO:0009423">
    <property type="term" value="P:chorismate biosynthetic process"/>
    <property type="evidence" value="ECO:0007669"/>
    <property type="project" value="UniProtKB-UniRule"/>
</dbReference>
<dbReference type="CDD" id="cd01556">
    <property type="entry name" value="EPSP_synthase"/>
    <property type="match status" value="1"/>
</dbReference>
<dbReference type="FunFam" id="3.65.10.10:FF:000005">
    <property type="entry name" value="3-phosphoshikimate 1-carboxyvinyltransferase"/>
    <property type="match status" value="1"/>
</dbReference>
<dbReference type="FunFam" id="3.65.10.10:FF:000006">
    <property type="entry name" value="3-phosphoshikimate 1-carboxyvinyltransferase"/>
    <property type="match status" value="1"/>
</dbReference>
<dbReference type="Gene3D" id="3.65.10.10">
    <property type="entry name" value="Enolpyruvate transferase domain"/>
    <property type="match status" value="2"/>
</dbReference>
<dbReference type="HAMAP" id="MF_00210">
    <property type="entry name" value="EPSP_synth"/>
    <property type="match status" value="1"/>
</dbReference>
<dbReference type="InterPro" id="IPR001986">
    <property type="entry name" value="Enolpyruvate_Tfrase_dom"/>
</dbReference>
<dbReference type="InterPro" id="IPR036968">
    <property type="entry name" value="Enolpyruvate_Tfrase_sf"/>
</dbReference>
<dbReference type="InterPro" id="IPR006264">
    <property type="entry name" value="EPSP_synthase"/>
</dbReference>
<dbReference type="InterPro" id="IPR023193">
    <property type="entry name" value="EPSP_synthase_CS"/>
</dbReference>
<dbReference type="InterPro" id="IPR013792">
    <property type="entry name" value="RNA3'P_cycl/enolpyr_Trfase_a/b"/>
</dbReference>
<dbReference type="NCBIfam" id="TIGR01356">
    <property type="entry name" value="aroA"/>
    <property type="match status" value="1"/>
</dbReference>
<dbReference type="PANTHER" id="PTHR21090">
    <property type="entry name" value="AROM/DEHYDROQUINATE SYNTHASE"/>
    <property type="match status" value="1"/>
</dbReference>
<dbReference type="PANTHER" id="PTHR21090:SF5">
    <property type="entry name" value="PENTAFUNCTIONAL AROM POLYPEPTIDE"/>
    <property type="match status" value="1"/>
</dbReference>
<dbReference type="Pfam" id="PF00275">
    <property type="entry name" value="EPSP_synthase"/>
    <property type="match status" value="1"/>
</dbReference>
<dbReference type="PIRSF" id="PIRSF000505">
    <property type="entry name" value="EPSPS"/>
    <property type="match status" value="1"/>
</dbReference>
<dbReference type="SUPFAM" id="SSF55205">
    <property type="entry name" value="EPT/RTPC-like"/>
    <property type="match status" value="1"/>
</dbReference>
<dbReference type="PROSITE" id="PS00104">
    <property type="entry name" value="EPSP_SYNTHASE_1"/>
    <property type="match status" value="1"/>
</dbReference>
<dbReference type="PROSITE" id="PS00885">
    <property type="entry name" value="EPSP_SYNTHASE_2"/>
    <property type="match status" value="1"/>
</dbReference>
<proteinExistence type="inferred from homology"/>
<reference key="1">
    <citation type="journal article" date="2015" name="Genome Announc.">
        <title>Complete genome sequence of Anaeromyxobacter sp. Fw109-5, an anaerobic, metal-reducing bacterium isolated from a contaminated subsurface environment.</title>
        <authorList>
            <person name="Hwang C."/>
            <person name="Copeland A."/>
            <person name="Lucas S."/>
            <person name="Lapidus A."/>
            <person name="Barry K."/>
            <person name="Glavina Del Rio T."/>
            <person name="Dalin E."/>
            <person name="Tice H."/>
            <person name="Pitluck S."/>
            <person name="Sims D."/>
            <person name="Brettin T."/>
            <person name="Bruce D.C."/>
            <person name="Detter J.C."/>
            <person name="Han C.S."/>
            <person name="Schmutz J."/>
            <person name="Larimer F.W."/>
            <person name="Land M.L."/>
            <person name="Hauser L.J."/>
            <person name="Kyrpides N."/>
            <person name="Lykidis A."/>
            <person name="Richardson P."/>
            <person name="Belieav A."/>
            <person name="Sanford R.A."/>
            <person name="Loeffler F.E."/>
            <person name="Fields M.W."/>
        </authorList>
    </citation>
    <scope>NUCLEOTIDE SEQUENCE [LARGE SCALE GENOMIC DNA]</scope>
    <source>
        <strain>Fw109-5</strain>
    </source>
</reference>
<comment type="function">
    <text evidence="1">Catalyzes the transfer of the enolpyruvyl moiety of phosphoenolpyruvate (PEP) to the 5-hydroxyl of shikimate-3-phosphate (S3P) to produce enolpyruvyl shikimate-3-phosphate and inorganic phosphate.</text>
</comment>
<comment type="catalytic activity">
    <reaction evidence="1">
        <text>3-phosphoshikimate + phosphoenolpyruvate = 5-O-(1-carboxyvinyl)-3-phosphoshikimate + phosphate</text>
        <dbReference type="Rhea" id="RHEA:21256"/>
        <dbReference type="ChEBI" id="CHEBI:43474"/>
        <dbReference type="ChEBI" id="CHEBI:57701"/>
        <dbReference type="ChEBI" id="CHEBI:58702"/>
        <dbReference type="ChEBI" id="CHEBI:145989"/>
        <dbReference type="EC" id="2.5.1.19"/>
    </reaction>
    <physiologicalReaction direction="left-to-right" evidence="1">
        <dbReference type="Rhea" id="RHEA:21257"/>
    </physiologicalReaction>
</comment>
<comment type="pathway">
    <text evidence="1">Metabolic intermediate biosynthesis; chorismate biosynthesis; chorismate from D-erythrose 4-phosphate and phosphoenolpyruvate: step 6/7.</text>
</comment>
<comment type="subunit">
    <text evidence="1">Monomer.</text>
</comment>
<comment type="subcellular location">
    <subcellularLocation>
        <location evidence="1">Cytoplasm</location>
    </subcellularLocation>
</comment>
<comment type="similarity">
    <text evidence="1">Belongs to the EPSP synthase family.</text>
</comment>